<feature type="chain" id="PRO_0000100857" description="Phosphoribosylaminoimidazole-succinocarboxamide synthase">
    <location>
        <begin position="1"/>
        <end position="236"/>
    </location>
</feature>
<sequence length="236" mass="26921">MEKREELYRGKAKSVYKTDDADRLILLFRNDTSAFDGKRIEQLDRKGTVNNKFNAFIMQKLEEAGIPTQFDKLLGDNECLVKKLDMIPVECVVRNYAAGSLVKRLGIEEGTKLNPYTFELFLKDDAKGDPFINESHVVAFGWGTAEQLVRMKELSIKVNEVLTKLFDDAGLLLVDFKLEFGVFHGEIVLGDEFSPDGCRLWDKDTRKKMDKDRFRQGLGDVIEAYEEVANRLGVPL</sequence>
<evidence type="ECO:0000255" key="1">
    <source>
        <dbReference type="HAMAP-Rule" id="MF_00137"/>
    </source>
</evidence>
<accession>Q87Y59</accession>
<name>PUR7_PSESM</name>
<proteinExistence type="inferred from homology"/>
<keyword id="KW-0067">ATP-binding</keyword>
<keyword id="KW-0436">Ligase</keyword>
<keyword id="KW-0547">Nucleotide-binding</keyword>
<keyword id="KW-0658">Purine biosynthesis</keyword>
<keyword id="KW-1185">Reference proteome</keyword>
<protein>
    <recommendedName>
        <fullName evidence="1">Phosphoribosylaminoimidazole-succinocarboxamide synthase</fullName>
        <ecNumber evidence="1">6.3.2.6</ecNumber>
    </recommendedName>
    <alternativeName>
        <fullName evidence="1">SAICAR synthetase</fullName>
    </alternativeName>
</protein>
<organism>
    <name type="scientific">Pseudomonas syringae pv. tomato (strain ATCC BAA-871 / DC3000)</name>
    <dbReference type="NCBI Taxonomy" id="223283"/>
    <lineage>
        <taxon>Bacteria</taxon>
        <taxon>Pseudomonadati</taxon>
        <taxon>Pseudomonadota</taxon>
        <taxon>Gammaproteobacteria</taxon>
        <taxon>Pseudomonadales</taxon>
        <taxon>Pseudomonadaceae</taxon>
        <taxon>Pseudomonas</taxon>
    </lineage>
</organism>
<comment type="catalytic activity">
    <reaction evidence="1">
        <text>5-amino-1-(5-phospho-D-ribosyl)imidazole-4-carboxylate + L-aspartate + ATP = (2S)-2-[5-amino-1-(5-phospho-beta-D-ribosyl)imidazole-4-carboxamido]succinate + ADP + phosphate + 2 H(+)</text>
        <dbReference type="Rhea" id="RHEA:22628"/>
        <dbReference type="ChEBI" id="CHEBI:15378"/>
        <dbReference type="ChEBI" id="CHEBI:29991"/>
        <dbReference type="ChEBI" id="CHEBI:30616"/>
        <dbReference type="ChEBI" id="CHEBI:43474"/>
        <dbReference type="ChEBI" id="CHEBI:58443"/>
        <dbReference type="ChEBI" id="CHEBI:77657"/>
        <dbReference type="ChEBI" id="CHEBI:456216"/>
        <dbReference type="EC" id="6.3.2.6"/>
    </reaction>
</comment>
<comment type="pathway">
    <text evidence="1">Purine metabolism; IMP biosynthesis via de novo pathway; 5-amino-1-(5-phospho-D-ribosyl)imidazole-4-carboxamide from 5-amino-1-(5-phospho-D-ribosyl)imidazole-4-carboxylate: step 1/2.</text>
</comment>
<comment type="similarity">
    <text evidence="1">Belongs to the SAICAR synthetase family.</text>
</comment>
<gene>
    <name evidence="1" type="primary">purC</name>
    <name type="ordered locus">PSPTO_3950</name>
</gene>
<reference key="1">
    <citation type="journal article" date="2003" name="Proc. Natl. Acad. Sci. U.S.A.">
        <title>The complete genome sequence of the Arabidopsis and tomato pathogen Pseudomonas syringae pv. tomato DC3000.</title>
        <authorList>
            <person name="Buell C.R."/>
            <person name="Joardar V."/>
            <person name="Lindeberg M."/>
            <person name="Selengut J."/>
            <person name="Paulsen I.T."/>
            <person name="Gwinn M.L."/>
            <person name="Dodson R.J."/>
            <person name="DeBoy R.T."/>
            <person name="Durkin A.S."/>
            <person name="Kolonay J.F."/>
            <person name="Madupu R."/>
            <person name="Daugherty S.C."/>
            <person name="Brinkac L.M."/>
            <person name="Beanan M.J."/>
            <person name="Haft D.H."/>
            <person name="Nelson W.C."/>
            <person name="Davidsen T.M."/>
            <person name="Zafar N."/>
            <person name="Zhou L."/>
            <person name="Liu J."/>
            <person name="Yuan Q."/>
            <person name="Khouri H.M."/>
            <person name="Fedorova N.B."/>
            <person name="Tran B."/>
            <person name="Russell D."/>
            <person name="Berry K.J."/>
            <person name="Utterback T.R."/>
            <person name="Van Aken S.E."/>
            <person name="Feldblyum T.V."/>
            <person name="D'Ascenzo M."/>
            <person name="Deng W.-L."/>
            <person name="Ramos A.R."/>
            <person name="Alfano J.R."/>
            <person name="Cartinhour S."/>
            <person name="Chatterjee A.K."/>
            <person name="Delaney T.P."/>
            <person name="Lazarowitz S.G."/>
            <person name="Martin G.B."/>
            <person name="Schneider D.J."/>
            <person name="Tang X."/>
            <person name="Bender C.L."/>
            <person name="White O."/>
            <person name="Fraser C.M."/>
            <person name="Collmer A."/>
        </authorList>
    </citation>
    <scope>NUCLEOTIDE SEQUENCE [LARGE SCALE GENOMIC DNA]</scope>
    <source>
        <strain>ATCC BAA-871 / DC3000</strain>
    </source>
</reference>
<dbReference type="EC" id="6.3.2.6" evidence="1"/>
<dbReference type="EMBL" id="AE016853">
    <property type="protein sequence ID" value="AAO57411.1"/>
    <property type="molecule type" value="Genomic_DNA"/>
</dbReference>
<dbReference type="RefSeq" id="NP_793716.1">
    <property type="nucleotide sequence ID" value="NC_004578.1"/>
</dbReference>
<dbReference type="RefSeq" id="WP_003379028.1">
    <property type="nucleotide sequence ID" value="NC_004578.1"/>
</dbReference>
<dbReference type="SMR" id="Q87Y59"/>
<dbReference type="STRING" id="223283.PSPTO_3950"/>
<dbReference type="GeneID" id="61788856"/>
<dbReference type="KEGG" id="pst:PSPTO_3950"/>
<dbReference type="PATRIC" id="fig|223283.9.peg.4049"/>
<dbReference type="eggNOG" id="COG0152">
    <property type="taxonomic scope" value="Bacteria"/>
</dbReference>
<dbReference type="HOGENOM" id="CLU_061495_2_0_6"/>
<dbReference type="OrthoDB" id="9801549at2"/>
<dbReference type="PhylomeDB" id="Q87Y59"/>
<dbReference type="UniPathway" id="UPA00074">
    <property type="reaction ID" value="UER00131"/>
</dbReference>
<dbReference type="Proteomes" id="UP000002515">
    <property type="component" value="Chromosome"/>
</dbReference>
<dbReference type="GO" id="GO:0005829">
    <property type="term" value="C:cytosol"/>
    <property type="evidence" value="ECO:0007669"/>
    <property type="project" value="TreeGrafter"/>
</dbReference>
<dbReference type="GO" id="GO:0005524">
    <property type="term" value="F:ATP binding"/>
    <property type="evidence" value="ECO:0007669"/>
    <property type="project" value="UniProtKB-KW"/>
</dbReference>
<dbReference type="GO" id="GO:0004639">
    <property type="term" value="F:phosphoribosylaminoimidazolesuccinocarboxamide synthase activity"/>
    <property type="evidence" value="ECO:0007669"/>
    <property type="project" value="UniProtKB-UniRule"/>
</dbReference>
<dbReference type="GO" id="GO:0006189">
    <property type="term" value="P:'de novo' IMP biosynthetic process"/>
    <property type="evidence" value="ECO:0007669"/>
    <property type="project" value="UniProtKB-UniRule"/>
</dbReference>
<dbReference type="GO" id="GO:0009236">
    <property type="term" value="P:cobalamin biosynthetic process"/>
    <property type="evidence" value="ECO:0007669"/>
    <property type="project" value="InterPro"/>
</dbReference>
<dbReference type="CDD" id="cd01415">
    <property type="entry name" value="SAICAR_synt_PurC"/>
    <property type="match status" value="1"/>
</dbReference>
<dbReference type="FunFam" id="3.30.200.20:FF:000086">
    <property type="entry name" value="Phosphoribosylaminoimidazole-succinocarboxamide synthase"/>
    <property type="match status" value="1"/>
</dbReference>
<dbReference type="FunFam" id="3.30.470.20:FF:000006">
    <property type="entry name" value="Phosphoribosylaminoimidazole-succinocarboxamide synthase"/>
    <property type="match status" value="1"/>
</dbReference>
<dbReference type="Gene3D" id="3.30.470.20">
    <property type="entry name" value="ATP-grasp fold, B domain"/>
    <property type="match status" value="1"/>
</dbReference>
<dbReference type="Gene3D" id="3.30.200.20">
    <property type="entry name" value="Phosphorylase Kinase, domain 1"/>
    <property type="match status" value="1"/>
</dbReference>
<dbReference type="HAMAP" id="MF_00137">
    <property type="entry name" value="SAICAR_synth"/>
    <property type="match status" value="1"/>
</dbReference>
<dbReference type="InterPro" id="IPR028923">
    <property type="entry name" value="SAICAR_synt/ADE2_N"/>
</dbReference>
<dbReference type="InterPro" id="IPR033934">
    <property type="entry name" value="SAICAR_synt_PurC"/>
</dbReference>
<dbReference type="InterPro" id="IPR001636">
    <property type="entry name" value="SAICAR_synth"/>
</dbReference>
<dbReference type="InterPro" id="IPR050089">
    <property type="entry name" value="SAICAR_synthetase"/>
</dbReference>
<dbReference type="InterPro" id="IPR018236">
    <property type="entry name" value="SAICAR_synthetase_CS"/>
</dbReference>
<dbReference type="NCBIfam" id="TIGR00081">
    <property type="entry name" value="purC"/>
    <property type="match status" value="1"/>
</dbReference>
<dbReference type="PANTHER" id="PTHR43599">
    <property type="entry name" value="MULTIFUNCTIONAL PROTEIN ADE2"/>
    <property type="match status" value="1"/>
</dbReference>
<dbReference type="PANTHER" id="PTHR43599:SF3">
    <property type="entry name" value="SI:DKEY-6E2.2"/>
    <property type="match status" value="1"/>
</dbReference>
<dbReference type="Pfam" id="PF01259">
    <property type="entry name" value="SAICAR_synt"/>
    <property type="match status" value="1"/>
</dbReference>
<dbReference type="SUPFAM" id="SSF56104">
    <property type="entry name" value="SAICAR synthase-like"/>
    <property type="match status" value="1"/>
</dbReference>
<dbReference type="PROSITE" id="PS01057">
    <property type="entry name" value="SAICAR_SYNTHETASE_1"/>
    <property type="match status" value="1"/>
</dbReference>
<dbReference type="PROSITE" id="PS01058">
    <property type="entry name" value="SAICAR_SYNTHETASE_2"/>
    <property type="match status" value="1"/>
</dbReference>